<keyword id="KW-0963">Cytoplasm</keyword>
<keyword id="KW-0521">NADP</keyword>
<keyword id="KW-0560">Oxidoreductase</keyword>
<keyword id="KW-0671">Queuosine biosynthesis</keyword>
<keyword id="KW-1185">Reference proteome</keyword>
<reference key="1">
    <citation type="submission" date="2005-08" db="EMBL/GenBank/DDBJ databases">
        <title>Complete sequence of chromosome 1 of Nitrosospira multiformis ATCC 25196.</title>
        <authorList>
            <person name="Copeland A."/>
            <person name="Lucas S."/>
            <person name="Lapidus A."/>
            <person name="Barry K."/>
            <person name="Detter J.C."/>
            <person name="Glavina T."/>
            <person name="Hammon N."/>
            <person name="Israni S."/>
            <person name="Pitluck S."/>
            <person name="Chain P."/>
            <person name="Malfatti S."/>
            <person name="Shin M."/>
            <person name="Vergez L."/>
            <person name="Schmutz J."/>
            <person name="Larimer F."/>
            <person name="Land M."/>
            <person name="Hauser L."/>
            <person name="Kyrpides N."/>
            <person name="Lykidis A."/>
            <person name="Richardson P."/>
        </authorList>
    </citation>
    <scope>NUCLEOTIDE SEQUENCE [LARGE SCALE GENOMIC DNA]</scope>
    <source>
        <strain>ATCC 25196 / NCIMB 11849 / C 71</strain>
    </source>
</reference>
<protein>
    <recommendedName>
        <fullName evidence="1">NADPH-dependent 7-cyano-7-deazaguanine reductase</fullName>
        <ecNumber evidence="1">1.7.1.13</ecNumber>
    </recommendedName>
    <alternativeName>
        <fullName evidence="1">7-cyano-7-carbaguanine reductase</fullName>
    </alternativeName>
    <alternativeName>
        <fullName evidence="1">NADPH-dependent nitrile oxidoreductase</fullName>
    </alternativeName>
    <alternativeName>
        <fullName evidence="1">PreQ(0) reductase</fullName>
    </alternativeName>
</protein>
<evidence type="ECO:0000255" key="1">
    <source>
        <dbReference type="HAMAP-Rule" id="MF_00818"/>
    </source>
</evidence>
<accession>Q2YBC0</accession>
<organism>
    <name type="scientific">Nitrosospira multiformis (strain ATCC 25196 / NCIMB 11849 / C 71)</name>
    <dbReference type="NCBI Taxonomy" id="323848"/>
    <lineage>
        <taxon>Bacteria</taxon>
        <taxon>Pseudomonadati</taxon>
        <taxon>Pseudomonadota</taxon>
        <taxon>Betaproteobacteria</taxon>
        <taxon>Nitrosomonadales</taxon>
        <taxon>Nitrosomonadaceae</taxon>
        <taxon>Nitrosospira</taxon>
    </lineage>
</organism>
<comment type="function">
    <text evidence="1">Catalyzes the NADPH-dependent reduction of 7-cyano-7-deazaguanine (preQ0) to 7-aminomethyl-7-deazaguanine (preQ1).</text>
</comment>
<comment type="catalytic activity">
    <reaction evidence="1">
        <text>7-aminomethyl-7-carbaguanine + 2 NADP(+) = 7-cyano-7-deazaguanine + 2 NADPH + 3 H(+)</text>
        <dbReference type="Rhea" id="RHEA:13409"/>
        <dbReference type="ChEBI" id="CHEBI:15378"/>
        <dbReference type="ChEBI" id="CHEBI:45075"/>
        <dbReference type="ChEBI" id="CHEBI:57783"/>
        <dbReference type="ChEBI" id="CHEBI:58349"/>
        <dbReference type="ChEBI" id="CHEBI:58703"/>
        <dbReference type="EC" id="1.7.1.13"/>
    </reaction>
</comment>
<comment type="pathway">
    <text evidence="1">tRNA modification; tRNA-queuosine biosynthesis.</text>
</comment>
<comment type="subcellular location">
    <subcellularLocation>
        <location evidence="1">Cytoplasm</location>
    </subcellularLocation>
</comment>
<comment type="similarity">
    <text evidence="1">Belongs to the GTP cyclohydrolase I family. QueF type 1 subfamily.</text>
</comment>
<dbReference type="EC" id="1.7.1.13" evidence="1"/>
<dbReference type="EMBL" id="CP000103">
    <property type="protein sequence ID" value="ABB73951.1"/>
    <property type="molecule type" value="Genomic_DNA"/>
</dbReference>
<dbReference type="RefSeq" id="WP_011380001.1">
    <property type="nucleotide sequence ID" value="NC_007614.1"/>
</dbReference>
<dbReference type="SMR" id="Q2YBC0"/>
<dbReference type="STRING" id="323848.Nmul_A0644"/>
<dbReference type="KEGG" id="nmu:Nmul_A0644"/>
<dbReference type="eggNOG" id="COG0780">
    <property type="taxonomic scope" value="Bacteria"/>
</dbReference>
<dbReference type="HOGENOM" id="CLU_102489_1_0_4"/>
<dbReference type="OrthoDB" id="9789995at2"/>
<dbReference type="UniPathway" id="UPA00392"/>
<dbReference type="Proteomes" id="UP000002718">
    <property type="component" value="Chromosome"/>
</dbReference>
<dbReference type="GO" id="GO:0005737">
    <property type="term" value="C:cytoplasm"/>
    <property type="evidence" value="ECO:0007669"/>
    <property type="project" value="UniProtKB-SubCell"/>
</dbReference>
<dbReference type="GO" id="GO:0033739">
    <property type="term" value="F:preQ1 synthase activity"/>
    <property type="evidence" value="ECO:0007669"/>
    <property type="project" value="UniProtKB-UniRule"/>
</dbReference>
<dbReference type="GO" id="GO:0008616">
    <property type="term" value="P:queuosine biosynthetic process"/>
    <property type="evidence" value="ECO:0007669"/>
    <property type="project" value="UniProtKB-UniRule"/>
</dbReference>
<dbReference type="GO" id="GO:0006400">
    <property type="term" value="P:tRNA modification"/>
    <property type="evidence" value="ECO:0007669"/>
    <property type="project" value="UniProtKB-UniRule"/>
</dbReference>
<dbReference type="Gene3D" id="3.30.1130.10">
    <property type="match status" value="1"/>
</dbReference>
<dbReference type="HAMAP" id="MF_00818">
    <property type="entry name" value="QueF_type1"/>
    <property type="match status" value="1"/>
</dbReference>
<dbReference type="InterPro" id="IPR043133">
    <property type="entry name" value="GTP-CH-I_C/QueF"/>
</dbReference>
<dbReference type="InterPro" id="IPR050084">
    <property type="entry name" value="NADPH_dep_7-cyano-7-deazaG_red"/>
</dbReference>
<dbReference type="InterPro" id="IPR029500">
    <property type="entry name" value="QueF"/>
</dbReference>
<dbReference type="InterPro" id="IPR016856">
    <property type="entry name" value="QueF_type1"/>
</dbReference>
<dbReference type="NCBIfam" id="TIGR03139">
    <property type="entry name" value="QueF-II"/>
    <property type="match status" value="1"/>
</dbReference>
<dbReference type="PANTHER" id="PTHR34354">
    <property type="entry name" value="NADPH-DEPENDENT 7-CYANO-7-DEAZAGUANINE REDUCTASE"/>
    <property type="match status" value="1"/>
</dbReference>
<dbReference type="PANTHER" id="PTHR34354:SF1">
    <property type="entry name" value="NADPH-DEPENDENT 7-CYANO-7-DEAZAGUANINE REDUCTASE"/>
    <property type="match status" value="1"/>
</dbReference>
<dbReference type="Pfam" id="PF14489">
    <property type="entry name" value="QueF"/>
    <property type="match status" value="1"/>
</dbReference>
<dbReference type="PIRSF" id="PIRSF027377">
    <property type="entry name" value="Nitrile_oxidored_QueF"/>
    <property type="match status" value="1"/>
</dbReference>
<dbReference type="SUPFAM" id="SSF55620">
    <property type="entry name" value="Tetrahydrobiopterin biosynthesis enzymes-like"/>
    <property type="match status" value="1"/>
</dbReference>
<proteinExistence type="inferred from homology"/>
<name>QUEF_NITMU</name>
<sequence>MPSRPDKNLETFPNPTQERDYHIHMEIPEFTCLCPKTGQPDFATLILDYIPDKKCVELKSLKLYIWSFRDENAFHEAVTNRIVDDLATALQPRYLRLTAKFYVRGGIFTTVVAEHRHSGWTPLPSVDLFHFDSQPSTRG</sequence>
<feature type="chain" id="PRO_0000247685" description="NADPH-dependent 7-cyano-7-deazaguanine reductase">
    <location>
        <begin position="1"/>
        <end position="139"/>
    </location>
</feature>
<feature type="active site" description="Thioimide intermediate" evidence="1">
    <location>
        <position position="34"/>
    </location>
</feature>
<feature type="active site" description="Proton donor" evidence="1">
    <location>
        <position position="41"/>
    </location>
</feature>
<feature type="binding site" evidence="1">
    <location>
        <begin position="56"/>
        <end position="58"/>
    </location>
    <ligand>
        <name>substrate</name>
    </ligand>
</feature>
<feature type="binding site" evidence="1">
    <location>
        <begin position="75"/>
        <end position="76"/>
    </location>
    <ligand>
        <name>substrate</name>
    </ligand>
</feature>
<gene>
    <name evidence="1" type="primary">queF</name>
    <name type="ordered locus">Nmul_A0644</name>
</gene>